<evidence type="ECO:0000255" key="1">
    <source>
        <dbReference type="HAMAP-Rule" id="MF_01107"/>
    </source>
</evidence>
<protein>
    <recommendedName>
        <fullName evidence="1">Acetylornithine aminotransferase</fullName>
        <shortName evidence="1">ACOAT</shortName>
        <ecNumber evidence="1">2.6.1.11</ecNumber>
    </recommendedName>
</protein>
<sequence>MSTAADSPLSLAHYYLPVYRPRQVVLERGQGSRVWDDAGREYLDLSSGIAVSGLGHNDPDLVAALTEQAGKLWHTSNVFFSAPPLKLAEELVSASRFAHKVFLCNSGTEANEAAIKLVRKWASSQGRPADKRVIVTFRGSFHGRTLASVTATAQPKYQEGYEPLPGGFRYVDFNDVAALEAAMAGGDVAAVMVEPIQGEGGVMPAAPGFLSRVRALCDQHDALLVLDEIQCGMGRTGTLFAHWQEQVTPDIVTLAKALGGGFPIGAMLAGPKVAQTMQFGAHGTTFGGNPLAAAVARVALRKLASPQIADNVVRQSAALRAGLEALNAEFGLFAQIRGRGLMLGAVLAPEHAGQAGAILDLAAKHGLLLLQAGPDVLRFVPALNLTDAELADGLARLRLATAEYVAQP</sequence>
<proteinExistence type="inferred from homology"/>
<organism>
    <name type="scientific">Xanthomonas axonopodis pv. citri (strain 306)</name>
    <dbReference type="NCBI Taxonomy" id="190486"/>
    <lineage>
        <taxon>Bacteria</taxon>
        <taxon>Pseudomonadati</taxon>
        <taxon>Pseudomonadota</taxon>
        <taxon>Gammaproteobacteria</taxon>
        <taxon>Lysobacterales</taxon>
        <taxon>Lysobacteraceae</taxon>
        <taxon>Xanthomonas</taxon>
    </lineage>
</organism>
<feature type="chain" id="PRO_0000112813" description="Acetylornithine aminotransferase">
    <location>
        <begin position="1"/>
        <end position="408"/>
    </location>
</feature>
<feature type="binding site" evidence="1">
    <location>
        <begin position="107"/>
        <end position="108"/>
    </location>
    <ligand>
        <name>pyridoxal 5'-phosphate</name>
        <dbReference type="ChEBI" id="CHEBI:597326"/>
    </ligand>
</feature>
<feature type="binding site" evidence="1">
    <location>
        <position position="141"/>
    </location>
    <ligand>
        <name>pyridoxal 5'-phosphate</name>
        <dbReference type="ChEBI" id="CHEBI:597326"/>
    </ligand>
</feature>
<feature type="binding site" evidence="1">
    <location>
        <position position="144"/>
    </location>
    <ligand>
        <name>N(2)-acetyl-L-ornithine</name>
        <dbReference type="ChEBI" id="CHEBI:57805"/>
    </ligand>
</feature>
<feature type="binding site" evidence="1">
    <location>
        <begin position="227"/>
        <end position="230"/>
    </location>
    <ligand>
        <name>pyridoxal 5'-phosphate</name>
        <dbReference type="ChEBI" id="CHEBI:597326"/>
    </ligand>
</feature>
<feature type="binding site" evidence="1">
    <location>
        <position position="284"/>
    </location>
    <ligand>
        <name>N(2)-acetyl-L-ornithine</name>
        <dbReference type="ChEBI" id="CHEBI:57805"/>
    </ligand>
</feature>
<feature type="binding site" evidence="1">
    <location>
        <position position="285"/>
    </location>
    <ligand>
        <name>pyridoxal 5'-phosphate</name>
        <dbReference type="ChEBI" id="CHEBI:597326"/>
    </ligand>
</feature>
<feature type="modified residue" description="N6-(pyridoxal phosphate)lysine" evidence="1">
    <location>
        <position position="256"/>
    </location>
</feature>
<accession>Q8PH31</accession>
<keyword id="KW-0028">Amino-acid biosynthesis</keyword>
<keyword id="KW-0032">Aminotransferase</keyword>
<keyword id="KW-0055">Arginine biosynthesis</keyword>
<keyword id="KW-0963">Cytoplasm</keyword>
<keyword id="KW-0663">Pyridoxal phosphate</keyword>
<keyword id="KW-0808">Transferase</keyword>
<name>ARGD_XANAC</name>
<reference key="1">
    <citation type="journal article" date="2002" name="Nature">
        <title>Comparison of the genomes of two Xanthomonas pathogens with differing host specificities.</title>
        <authorList>
            <person name="da Silva A.C.R."/>
            <person name="Ferro J.A."/>
            <person name="Reinach F.C."/>
            <person name="Farah C.S."/>
            <person name="Furlan L.R."/>
            <person name="Quaggio R.B."/>
            <person name="Monteiro-Vitorello C.B."/>
            <person name="Van Sluys M.A."/>
            <person name="Almeida N.F. Jr."/>
            <person name="Alves L.M.C."/>
            <person name="do Amaral A.M."/>
            <person name="Bertolini M.C."/>
            <person name="Camargo L.E.A."/>
            <person name="Camarotte G."/>
            <person name="Cannavan F."/>
            <person name="Cardozo J."/>
            <person name="Chambergo F."/>
            <person name="Ciapina L.P."/>
            <person name="Cicarelli R.M.B."/>
            <person name="Coutinho L.L."/>
            <person name="Cursino-Santos J.R."/>
            <person name="El-Dorry H."/>
            <person name="Faria J.B."/>
            <person name="Ferreira A.J.S."/>
            <person name="Ferreira R.C.C."/>
            <person name="Ferro M.I.T."/>
            <person name="Formighieri E.F."/>
            <person name="Franco M.C."/>
            <person name="Greggio C.C."/>
            <person name="Gruber A."/>
            <person name="Katsuyama A.M."/>
            <person name="Kishi L.T."/>
            <person name="Leite R.P."/>
            <person name="Lemos E.G.M."/>
            <person name="Lemos M.V.F."/>
            <person name="Locali E.C."/>
            <person name="Machado M.A."/>
            <person name="Madeira A.M.B.N."/>
            <person name="Martinez-Rossi N.M."/>
            <person name="Martins E.C."/>
            <person name="Meidanis J."/>
            <person name="Menck C.F.M."/>
            <person name="Miyaki C.Y."/>
            <person name="Moon D.H."/>
            <person name="Moreira L.M."/>
            <person name="Novo M.T.M."/>
            <person name="Okura V.K."/>
            <person name="Oliveira M.C."/>
            <person name="Oliveira V.R."/>
            <person name="Pereira H.A."/>
            <person name="Rossi A."/>
            <person name="Sena J.A.D."/>
            <person name="Silva C."/>
            <person name="de Souza R.F."/>
            <person name="Spinola L.A.F."/>
            <person name="Takita M.A."/>
            <person name="Tamura R.E."/>
            <person name="Teixeira E.C."/>
            <person name="Tezza R.I.D."/>
            <person name="Trindade dos Santos M."/>
            <person name="Truffi D."/>
            <person name="Tsai S.M."/>
            <person name="White F.F."/>
            <person name="Setubal J.C."/>
            <person name="Kitajima J.P."/>
        </authorList>
    </citation>
    <scope>NUCLEOTIDE SEQUENCE [LARGE SCALE GENOMIC DNA]</scope>
    <source>
        <strain>306</strain>
    </source>
</reference>
<dbReference type="EC" id="2.6.1.11" evidence="1"/>
<dbReference type="EMBL" id="AE008923">
    <property type="protein sequence ID" value="AAM38272.1"/>
    <property type="molecule type" value="Genomic_DNA"/>
</dbReference>
<dbReference type="RefSeq" id="WP_011052271.1">
    <property type="nucleotide sequence ID" value="NC_003919.1"/>
</dbReference>
<dbReference type="SMR" id="Q8PH31"/>
<dbReference type="KEGG" id="xac:XAC3429"/>
<dbReference type="eggNOG" id="COG4992">
    <property type="taxonomic scope" value="Bacteria"/>
</dbReference>
<dbReference type="HOGENOM" id="CLU_016922_10_1_6"/>
<dbReference type="UniPathway" id="UPA00068">
    <property type="reaction ID" value="UER00109"/>
</dbReference>
<dbReference type="Proteomes" id="UP000000576">
    <property type="component" value="Chromosome"/>
</dbReference>
<dbReference type="GO" id="GO:0005737">
    <property type="term" value="C:cytoplasm"/>
    <property type="evidence" value="ECO:0007669"/>
    <property type="project" value="UniProtKB-SubCell"/>
</dbReference>
<dbReference type="GO" id="GO:0042802">
    <property type="term" value="F:identical protein binding"/>
    <property type="evidence" value="ECO:0007669"/>
    <property type="project" value="TreeGrafter"/>
</dbReference>
<dbReference type="GO" id="GO:0003992">
    <property type="term" value="F:N2-acetyl-L-ornithine:2-oxoglutarate 5-aminotransferase activity"/>
    <property type="evidence" value="ECO:0007669"/>
    <property type="project" value="UniProtKB-UniRule"/>
</dbReference>
<dbReference type="GO" id="GO:0030170">
    <property type="term" value="F:pyridoxal phosphate binding"/>
    <property type="evidence" value="ECO:0007669"/>
    <property type="project" value="InterPro"/>
</dbReference>
<dbReference type="GO" id="GO:0006526">
    <property type="term" value="P:L-arginine biosynthetic process"/>
    <property type="evidence" value="ECO:0007669"/>
    <property type="project" value="UniProtKB-UniRule"/>
</dbReference>
<dbReference type="CDD" id="cd00610">
    <property type="entry name" value="OAT_like"/>
    <property type="match status" value="1"/>
</dbReference>
<dbReference type="FunFam" id="3.40.640.10:FF:000117">
    <property type="entry name" value="Acetylornithine aminotransferase"/>
    <property type="match status" value="1"/>
</dbReference>
<dbReference type="Gene3D" id="3.90.1150.10">
    <property type="entry name" value="Aspartate Aminotransferase, domain 1"/>
    <property type="match status" value="1"/>
</dbReference>
<dbReference type="Gene3D" id="3.40.640.10">
    <property type="entry name" value="Type I PLP-dependent aspartate aminotransferase-like (Major domain)"/>
    <property type="match status" value="1"/>
</dbReference>
<dbReference type="HAMAP" id="MF_01107">
    <property type="entry name" value="ArgD_aminotrans_3"/>
    <property type="match status" value="1"/>
</dbReference>
<dbReference type="InterPro" id="IPR004636">
    <property type="entry name" value="AcOrn/SuccOrn_fam"/>
</dbReference>
<dbReference type="InterPro" id="IPR005814">
    <property type="entry name" value="Aminotrans_3"/>
</dbReference>
<dbReference type="InterPro" id="IPR049704">
    <property type="entry name" value="Aminotrans_3_PPA_site"/>
</dbReference>
<dbReference type="InterPro" id="IPR050103">
    <property type="entry name" value="Class-III_PLP-dep_AT"/>
</dbReference>
<dbReference type="InterPro" id="IPR015424">
    <property type="entry name" value="PyrdxlP-dep_Trfase"/>
</dbReference>
<dbReference type="InterPro" id="IPR015421">
    <property type="entry name" value="PyrdxlP-dep_Trfase_major"/>
</dbReference>
<dbReference type="InterPro" id="IPR015422">
    <property type="entry name" value="PyrdxlP-dep_Trfase_small"/>
</dbReference>
<dbReference type="NCBIfam" id="TIGR00707">
    <property type="entry name" value="argD"/>
    <property type="match status" value="1"/>
</dbReference>
<dbReference type="NCBIfam" id="NF002325">
    <property type="entry name" value="PRK01278.1"/>
    <property type="match status" value="1"/>
</dbReference>
<dbReference type="NCBIfam" id="NF003397">
    <property type="entry name" value="PRK04612.1"/>
    <property type="match status" value="1"/>
</dbReference>
<dbReference type="PANTHER" id="PTHR11986">
    <property type="entry name" value="AMINOTRANSFERASE CLASS III"/>
    <property type="match status" value="1"/>
</dbReference>
<dbReference type="PANTHER" id="PTHR11986:SF113">
    <property type="entry name" value="SUCCINYLORNITHINE TRANSAMINASE"/>
    <property type="match status" value="1"/>
</dbReference>
<dbReference type="Pfam" id="PF00202">
    <property type="entry name" value="Aminotran_3"/>
    <property type="match status" value="1"/>
</dbReference>
<dbReference type="PIRSF" id="PIRSF000521">
    <property type="entry name" value="Transaminase_4ab_Lys_Orn"/>
    <property type="match status" value="1"/>
</dbReference>
<dbReference type="SUPFAM" id="SSF53383">
    <property type="entry name" value="PLP-dependent transferases"/>
    <property type="match status" value="1"/>
</dbReference>
<dbReference type="PROSITE" id="PS00600">
    <property type="entry name" value="AA_TRANSFER_CLASS_3"/>
    <property type="match status" value="1"/>
</dbReference>
<gene>
    <name evidence="1" type="primary">argD</name>
    <name type="ordered locus">XAC3429</name>
</gene>
<comment type="catalytic activity">
    <reaction evidence="1">
        <text>N(2)-acetyl-L-ornithine + 2-oxoglutarate = N-acetyl-L-glutamate 5-semialdehyde + L-glutamate</text>
        <dbReference type="Rhea" id="RHEA:18049"/>
        <dbReference type="ChEBI" id="CHEBI:16810"/>
        <dbReference type="ChEBI" id="CHEBI:29123"/>
        <dbReference type="ChEBI" id="CHEBI:29985"/>
        <dbReference type="ChEBI" id="CHEBI:57805"/>
        <dbReference type="EC" id="2.6.1.11"/>
    </reaction>
</comment>
<comment type="cofactor">
    <cofactor evidence="1">
        <name>pyridoxal 5'-phosphate</name>
        <dbReference type="ChEBI" id="CHEBI:597326"/>
    </cofactor>
    <text evidence="1">Binds 1 pyridoxal phosphate per subunit.</text>
</comment>
<comment type="pathway">
    <text evidence="1">Amino-acid biosynthesis; L-arginine biosynthesis; N(2)-acetyl-L-ornithine from L-glutamate: step 4/4.</text>
</comment>
<comment type="subunit">
    <text evidence="1">Homodimer.</text>
</comment>
<comment type="subcellular location">
    <subcellularLocation>
        <location evidence="1">Cytoplasm</location>
    </subcellularLocation>
</comment>
<comment type="miscellaneous">
    <text evidence="1">May also have succinyldiaminopimelate aminotransferase activity, thus carrying out the corresponding step in lysine biosynthesis.</text>
</comment>
<comment type="similarity">
    <text evidence="1">Belongs to the class-III pyridoxal-phosphate-dependent aminotransferase family. ArgD subfamily.</text>
</comment>